<protein>
    <recommendedName>
        <fullName evidence="1">Pyoverdine export ATP-binding/permease protein PvdT</fullName>
        <ecNumber evidence="1">7.6.2.-</ecNumber>
    </recommendedName>
</protein>
<dbReference type="EC" id="7.6.2.-" evidence="1"/>
<dbReference type="EMBL" id="CP000058">
    <property type="protein sequence ID" value="AAZ37113.1"/>
    <property type="molecule type" value="Genomic_DNA"/>
</dbReference>
<dbReference type="RefSeq" id="WP_004664640.1">
    <property type="nucleotide sequence ID" value="NC_005773.3"/>
</dbReference>
<dbReference type="SMR" id="Q48KB2"/>
<dbReference type="KEGG" id="psp:PSPPH_1935"/>
<dbReference type="eggNOG" id="COG0577">
    <property type="taxonomic scope" value="Bacteria"/>
</dbReference>
<dbReference type="eggNOG" id="COG1136">
    <property type="taxonomic scope" value="Bacteria"/>
</dbReference>
<dbReference type="HOGENOM" id="CLU_000604_78_2_6"/>
<dbReference type="Proteomes" id="UP000000551">
    <property type="component" value="Chromosome"/>
</dbReference>
<dbReference type="GO" id="GO:0005886">
    <property type="term" value="C:plasma membrane"/>
    <property type="evidence" value="ECO:0007669"/>
    <property type="project" value="UniProtKB-SubCell"/>
</dbReference>
<dbReference type="GO" id="GO:0005524">
    <property type="term" value="F:ATP binding"/>
    <property type="evidence" value="ECO:0007669"/>
    <property type="project" value="UniProtKB-KW"/>
</dbReference>
<dbReference type="GO" id="GO:0016887">
    <property type="term" value="F:ATP hydrolysis activity"/>
    <property type="evidence" value="ECO:0007669"/>
    <property type="project" value="InterPro"/>
</dbReference>
<dbReference type="GO" id="GO:0022857">
    <property type="term" value="F:transmembrane transporter activity"/>
    <property type="evidence" value="ECO:0007669"/>
    <property type="project" value="TreeGrafter"/>
</dbReference>
<dbReference type="CDD" id="cd03255">
    <property type="entry name" value="ABC_MJ0796_LolCDE_FtsE"/>
    <property type="match status" value="1"/>
</dbReference>
<dbReference type="FunFam" id="3.40.50.300:FF:000032">
    <property type="entry name" value="Export ABC transporter ATP-binding protein"/>
    <property type="match status" value="1"/>
</dbReference>
<dbReference type="Gene3D" id="3.40.50.300">
    <property type="entry name" value="P-loop containing nucleotide triphosphate hydrolases"/>
    <property type="match status" value="1"/>
</dbReference>
<dbReference type="InterPro" id="IPR003593">
    <property type="entry name" value="AAA+_ATPase"/>
</dbReference>
<dbReference type="InterPro" id="IPR003838">
    <property type="entry name" value="ABC3_permease_C"/>
</dbReference>
<dbReference type="InterPro" id="IPR003439">
    <property type="entry name" value="ABC_transporter-like_ATP-bd"/>
</dbReference>
<dbReference type="InterPro" id="IPR017871">
    <property type="entry name" value="ABC_transporter-like_CS"/>
</dbReference>
<dbReference type="InterPro" id="IPR017911">
    <property type="entry name" value="MacB-like_ATP-bd"/>
</dbReference>
<dbReference type="InterPro" id="IPR025857">
    <property type="entry name" value="MacB_PCD"/>
</dbReference>
<dbReference type="InterPro" id="IPR050250">
    <property type="entry name" value="Macrolide_Exporter_MacB"/>
</dbReference>
<dbReference type="InterPro" id="IPR027417">
    <property type="entry name" value="P-loop_NTPase"/>
</dbReference>
<dbReference type="PANTHER" id="PTHR30572:SF14">
    <property type="entry name" value="MACROLIDE EXPORT ATP-BINDING_PERMEASE PROTEIN MACB"/>
    <property type="match status" value="1"/>
</dbReference>
<dbReference type="PANTHER" id="PTHR30572">
    <property type="entry name" value="MEMBRANE COMPONENT OF TRANSPORTER-RELATED"/>
    <property type="match status" value="1"/>
</dbReference>
<dbReference type="Pfam" id="PF00005">
    <property type="entry name" value="ABC_tran"/>
    <property type="match status" value="1"/>
</dbReference>
<dbReference type="Pfam" id="PF02687">
    <property type="entry name" value="FtsX"/>
    <property type="match status" value="1"/>
</dbReference>
<dbReference type="Pfam" id="PF12704">
    <property type="entry name" value="MacB_PCD"/>
    <property type="match status" value="1"/>
</dbReference>
<dbReference type="SMART" id="SM00382">
    <property type="entry name" value="AAA"/>
    <property type="match status" value="1"/>
</dbReference>
<dbReference type="SUPFAM" id="SSF52540">
    <property type="entry name" value="P-loop containing nucleoside triphosphate hydrolases"/>
    <property type="match status" value="1"/>
</dbReference>
<dbReference type="PROSITE" id="PS00211">
    <property type="entry name" value="ABC_TRANSPORTER_1"/>
    <property type="match status" value="1"/>
</dbReference>
<dbReference type="PROSITE" id="PS50893">
    <property type="entry name" value="ABC_TRANSPORTER_2"/>
    <property type="match status" value="1"/>
</dbReference>
<dbReference type="PROSITE" id="PS51267">
    <property type="entry name" value="MACB"/>
    <property type="match status" value="1"/>
</dbReference>
<organism>
    <name type="scientific">Pseudomonas savastanoi pv. phaseolicola (strain 1448A / Race 6)</name>
    <name type="common">Pseudomonas syringae pv. phaseolicola (strain 1448A / Race 6)</name>
    <dbReference type="NCBI Taxonomy" id="264730"/>
    <lineage>
        <taxon>Bacteria</taxon>
        <taxon>Pseudomonadati</taxon>
        <taxon>Pseudomonadota</taxon>
        <taxon>Gammaproteobacteria</taxon>
        <taxon>Pseudomonadales</taxon>
        <taxon>Pseudomonadaceae</taxon>
        <taxon>Pseudomonas</taxon>
    </lineage>
</organism>
<sequence length="656" mass="69487">MQTPLIDLRAIRKSYGGGDSPLVNVLRGIDLSIHAGEFVAIVGASGSGKSTLMNILGCLDRPTSGEYLFAGENVAELGSDELAWLRREAFGFVFQGYHLIPSGSAQENVEMPAIYAGTPAAERHARAAALLDRLGLGSRTGNRPHQLSGGQQQRVSIARALMNGGHIILADEPTGALDSHSGAEVMALLDELASQGHVVILITHDREVAARAKRVIEISDGLVVSDTACDLSAPRSANPAALQAVDLRKRLSEGSGSRGAWKGELLDAVQAAWRVMWINRFRTALTLLGIVIGVASVVVMLAVGEGSKRQVMAQMSSFGSNIIYLNGKAPNPRAPKGIITLDEVAALGELPEVKMIMPVNGGQAGVRYGNVDHSSYVGGNDTHFPAIFNWPVVEGSYFSEADEQSAAAVAVIGYKVRQKLFGEHTDPIGQYILIENVPFQVVGVLEEKGATSGDLDSDNRIAIPYSAASIRLFGSQDPEYITIATRDANNVKHAEEAIRNLLQRLHNGKQDYELTNNAAMIQAEARTQNTLSLMLGSIAAISLLVGGIGVMNIMLMTVRERTREIGIRMATGARQSDILRQFLTEAVMLSVVGGLAGVVLALGMGAALLLSKVAVAFTVPAVAGAFACALVTGVIFGFMPARKAARLDPVAALTSE</sequence>
<accession>Q48KB2</accession>
<reference key="1">
    <citation type="journal article" date="2005" name="J. Bacteriol.">
        <title>Whole-genome sequence analysis of Pseudomonas syringae pv. phaseolicola 1448A reveals divergence among pathovars in genes involved in virulence and transposition.</title>
        <authorList>
            <person name="Joardar V."/>
            <person name="Lindeberg M."/>
            <person name="Jackson R.W."/>
            <person name="Selengut J."/>
            <person name="Dodson R."/>
            <person name="Brinkac L.M."/>
            <person name="Daugherty S.C."/>
            <person name="DeBoy R.T."/>
            <person name="Durkin A.S."/>
            <person name="Gwinn Giglio M."/>
            <person name="Madupu R."/>
            <person name="Nelson W.C."/>
            <person name="Rosovitz M.J."/>
            <person name="Sullivan S.A."/>
            <person name="Crabtree J."/>
            <person name="Creasy T."/>
            <person name="Davidsen T.M."/>
            <person name="Haft D.H."/>
            <person name="Zafar N."/>
            <person name="Zhou L."/>
            <person name="Halpin R."/>
            <person name="Holley T."/>
            <person name="Khouri H.M."/>
            <person name="Feldblyum T.V."/>
            <person name="White O."/>
            <person name="Fraser C.M."/>
            <person name="Chatterjee A.K."/>
            <person name="Cartinhour S."/>
            <person name="Schneider D."/>
            <person name="Mansfield J.W."/>
            <person name="Collmer A."/>
            <person name="Buell R."/>
        </authorList>
    </citation>
    <scope>NUCLEOTIDE SEQUENCE [LARGE SCALE GENOMIC DNA]</scope>
    <source>
        <strain>1448A / Race 6</strain>
    </source>
</reference>
<keyword id="KW-0067">ATP-binding</keyword>
<keyword id="KW-0997">Cell inner membrane</keyword>
<keyword id="KW-1003">Cell membrane</keyword>
<keyword id="KW-0472">Membrane</keyword>
<keyword id="KW-0547">Nucleotide-binding</keyword>
<keyword id="KW-1278">Translocase</keyword>
<keyword id="KW-0812">Transmembrane</keyword>
<keyword id="KW-1133">Transmembrane helix</keyword>
<keyword id="KW-0813">Transport</keyword>
<feature type="chain" id="PRO_0000269962" description="Pyoverdine export ATP-binding/permease protein PvdT">
    <location>
        <begin position="1"/>
        <end position="656"/>
    </location>
</feature>
<feature type="transmembrane region" description="Helical" evidence="3">
    <location>
        <begin position="284"/>
        <end position="304"/>
    </location>
</feature>
<feature type="transmembrane region" description="Helical" evidence="3">
    <location>
        <begin position="538"/>
        <end position="558"/>
    </location>
</feature>
<feature type="transmembrane region" description="Helical" evidence="3">
    <location>
        <begin position="589"/>
        <end position="609"/>
    </location>
</feature>
<feature type="transmembrane region" description="Helical" evidence="3">
    <location>
        <begin position="619"/>
        <end position="639"/>
    </location>
</feature>
<feature type="domain" description="ABC transporter" evidence="4">
    <location>
        <begin position="6"/>
        <end position="245"/>
    </location>
</feature>
<feature type="binding site" evidence="4">
    <location>
        <begin position="43"/>
        <end position="50"/>
    </location>
    <ligand>
        <name>ATP</name>
        <dbReference type="ChEBI" id="CHEBI:30616"/>
    </ligand>
</feature>
<evidence type="ECO:0000250" key="1">
    <source>
        <dbReference type="UniProtKB" id="Q88F88"/>
    </source>
</evidence>
<evidence type="ECO:0000250" key="2">
    <source>
        <dbReference type="UniProtKB" id="Q9I191"/>
    </source>
</evidence>
<evidence type="ECO:0000255" key="3"/>
<evidence type="ECO:0000255" key="4">
    <source>
        <dbReference type="PROSITE-ProRule" id="PRU00434"/>
    </source>
</evidence>
<evidence type="ECO:0000305" key="5"/>
<proteinExistence type="inferred from homology"/>
<name>PVDT_PSE14</name>
<comment type="function">
    <text evidence="1 2">Part of the tripartite efflux system PvdRT-OpmQ required for the secretion into the extracellular milieu of the siderophore pyoverdine (PVD), which is involved in iron acquisition (By similarity). This subunit binds PVD and drives its secretion by hydrolyzing ATP (By similarity). The system is responsible for export of newly synthesized PVD after the final steps of biosynthesis have taken place in the periplasm (By similarity). It is also responsible for recycling of PVD after internalization of ferri-PVD into the periplasm by the outer-membrane receptor FpvA and release of iron from PVD, thus making PVD available for new cycles of iron uptake (By similarity).</text>
</comment>
<comment type="subunit">
    <text evidence="2">Part of the tripartite efflux system PvdRT-OpmQ, which is composed of an inner membrane component with both ATPase and permease domains, PvdT, a periplasmic membrane fusion protein, PvdR, and an outer membrane component, OpmQ.</text>
</comment>
<comment type="subcellular location">
    <subcellularLocation>
        <location evidence="1">Cell inner membrane</location>
        <topology evidence="3">Multi-pass membrane protein</topology>
    </subcellularLocation>
</comment>
<comment type="similarity">
    <text evidence="5">Belongs to the ABC transporter superfamily. Macrolide exporter (TC 3.A.1.122) family.</text>
</comment>
<gene>
    <name evidence="1" type="primary">pvdT</name>
    <name type="ordered locus">PSPPH_1935</name>
</gene>